<name>THF1_SYNE7</name>
<organism>
    <name type="scientific">Synechococcus elongatus (strain ATCC 33912 / PCC 7942 / FACHB-805)</name>
    <name type="common">Anacystis nidulans R2</name>
    <dbReference type="NCBI Taxonomy" id="1140"/>
    <lineage>
        <taxon>Bacteria</taxon>
        <taxon>Bacillati</taxon>
        <taxon>Cyanobacteriota</taxon>
        <taxon>Cyanophyceae</taxon>
        <taxon>Synechococcales</taxon>
        <taxon>Synechococcaceae</taxon>
        <taxon>Synechococcus</taxon>
    </lineage>
</organism>
<accession>Q31MY4</accession>
<feature type="chain" id="PRO_0000235222" description="Protein Thf1">
    <location>
        <begin position="1"/>
        <end position="254"/>
    </location>
</feature>
<feature type="region of interest" description="Disordered" evidence="2">
    <location>
        <begin position="213"/>
        <end position="254"/>
    </location>
</feature>
<feature type="coiled-coil region" evidence="1">
    <location>
        <begin position="183"/>
        <end position="217"/>
    </location>
</feature>
<feature type="compositionally biased region" description="Basic and acidic residues" evidence="2">
    <location>
        <begin position="213"/>
        <end position="227"/>
    </location>
</feature>
<feature type="compositionally biased region" description="Low complexity" evidence="2">
    <location>
        <begin position="228"/>
        <end position="240"/>
    </location>
</feature>
<feature type="compositionally biased region" description="Acidic residues" evidence="2">
    <location>
        <begin position="245"/>
        <end position="254"/>
    </location>
</feature>
<reference key="1">
    <citation type="submission" date="2005-08" db="EMBL/GenBank/DDBJ databases">
        <title>Complete sequence of chromosome 1 of Synechococcus elongatus PCC 7942.</title>
        <authorList>
            <consortium name="US DOE Joint Genome Institute"/>
            <person name="Copeland A."/>
            <person name="Lucas S."/>
            <person name="Lapidus A."/>
            <person name="Barry K."/>
            <person name="Detter J.C."/>
            <person name="Glavina T."/>
            <person name="Hammon N."/>
            <person name="Israni S."/>
            <person name="Pitluck S."/>
            <person name="Schmutz J."/>
            <person name="Larimer F."/>
            <person name="Land M."/>
            <person name="Kyrpides N."/>
            <person name="Lykidis A."/>
            <person name="Golden S."/>
            <person name="Richardson P."/>
        </authorList>
    </citation>
    <scope>NUCLEOTIDE SEQUENCE [LARGE SCALE GENOMIC DNA]</scope>
    <source>
        <strain>ATCC 33912 / PCC 7942 / FACHB-805</strain>
    </source>
</reference>
<protein>
    <recommendedName>
        <fullName evidence="1">Protein Thf1</fullName>
    </recommendedName>
</protein>
<keyword id="KW-0175">Coiled coil</keyword>
<keyword id="KW-1185">Reference proteome</keyword>
<comment type="function">
    <text evidence="1">May be involved in photosynthetic membrane biogenesis.</text>
</comment>
<comment type="similarity">
    <text evidence="1">Belongs to the THF1 family.</text>
</comment>
<comment type="sequence caution" evidence="3">
    <conflict type="erroneous initiation">
        <sequence resource="EMBL-CDS" id="ABB57585"/>
    </conflict>
</comment>
<dbReference type="EMBL" id="CP000100">
    <property type="protein sequence ID" value="ABB57585.1"/>
    <property type="status" value="ALT_INIT"/>
    <property type="molecule type" value="Genomic_DNA"/>
</dbReference>
<dbReference type="SMR" id="Q31MY4"/>
<dbReference type="STRING" id="1140.Synpcc7942_1555"/>
<dbReference type="PaxDb" id="1140-Synpcc7942_1555"/>
<dbReference type="KEGG" id="syf:Synpcc7942_1555"/>
<dbReference type="eggNOG" id="ENOG502Z86M">
    <property type="taxonomic scope" value="Bacteria"/>
</dbReference>
<dbReference type="HOGENOM" id="CLU_079763_1_0_3"/>
<dbReference type="BioCyc" id="SYNEL:SYNPCC7942_1555-MONOMER"/>
<dbReference type="Proteomes" id="UP000889800">
    <property type="component" value="Chromosome"/>
</dbReference>
<dbReference type="GO" id="GO:0030096">
    <property type="term" value="C:plasma membrane-derived thylakoid photosystem II"/>
    <property type="evidence" value="ECO:0007669"/>
    <property type="project" value="TreeGrafter"/>
</dbReference>
<dbReference type="GO" id="GO:0010207">
    <property type="term" value="P:photosystem II assembly"/>
    <property type="evidence" value="ECO:0007669"/>
    <property type="project" value="InterPro"/>
</dbReference>
<dbReference type="HAMAP" id="MF_01843">
    <property type="entry name" value="Thf1"/>
    <property type="match status" value="1"/>
</dbReference>
<dbReference type="InterPro" id="IPR017499">
    <property type="entry name" value="Thf1"/>
</dbReference>
<dbReference type="NCBIfam" id="TIGR03060">
    <property type="entry name" value="PS_II_psb29"/>
    <property type="match status" value="1"/>
</dbReference>
<dbReference type="PANTHER" id="PTHR34793">
    <property type="entry name" value="PROTEIN THYLAKOID FORMATION 1, CHLOROPLASTIC"/>
    <property type="match status" value="1"/>
</dbReference>
<dbReference type="PANTHER" id="PTHR34793:SF1">
    <property type="entry name" value="PROTEIN THYLAKOID FORMATION 1, CHLOROPLASTIC"/>
    <property type="match status" value="1"/>
</dbReference>
<dbReference type="Pfam" id="PF11264">
    <property type="entry name" value="ThylakoidFormat"/>
    <property type="match status" value="1"/>
</dbReference>
<gene>
    <name evidence="1" type="primary">thf1</name>
    <name type="ordered locus">Synpcc7942_1555</name>
</gene>
<evidence type="ECO:0000255" key="1">
    <source>
        <dbReference type="HAMAP-Rule" id="MF_01843"/>
    </source>
</evidence>
<evidence type="ECO:0000256" key="2">
    <source>
        <dbReference type="SAM" id="MobiDB-lite"/>
    </source>
</evidence>
<evidence type="ECO:0000305" key="3"/>
<proteinExistence type="inferred from homology"/>
<sequence length="254" mass="28306">MTSVPTVSDSKRAFYAAYPRPINPLYRRVVEELLVEIHLLSVNTSFVYDPLFALGVVTAFDSFMSSYRPIEAVGPLFTALTQAVRQNPEQYRHDANAIAEQVRGVGSDTIRQWLTEAEALGNAPELVRSSFQAIAGRSEFKYSRLFAIGLFSLLETAAPDLVQDPEALKTTVTAIAERFHLPSDKLQKDLDLYRSNLEKMEQARITMEEAIQADRRKREQREQEKLAKAAAAEAPAALEASSDNPEPETSETPS</sequence>